<sequence>MDIVSLAWAALMVVFSFSLSLVVWGRSGL</sequence>
<organism>
    <name type="scientific">Glycine max</name>
    <name type="common">Soybean</name>
    <name type="synonym">Glycine hispida</name>
    <dbReference type="NCBI Taxonomy" id="3847"/>
    <lineage>
        <taxon>Eukaryota</taxon>
        <taxon>Viridiplantae</taxon>
        <taxon>Streptophyta</taxon>
        <taxon>Embryophyta</taxon>
        <taxon>Tracheophyta</taxon>
        <taxon>Spermatophyta</taxon>
        <taxon>Magnoliopsida</taxon>
        <taxon>eudicotyledons</taxon>
        <taxon>Gunneridae</taxon>
        <taxon>Pentapetalae</taxon>
        <taxon>rosids</taxon>
        <taxon>fabids</taxon>
        <taxon>Fabales</taxon>
        <taxon>Fabaceae</taxon>
        <taxon>Papilionoideae</taxon>
        <taxon>50 kb inversion clade</taxon>
        <taxon>NPAAA clade</taxon>
        <taxon>indigoferoid/millettioid clade</taxon>
        <taxon>Phaseoleae</taxon>
        <taxon>Glycine</taxon>
        <taxon>Glycine subgen. Soja</taxon>
    </lineage>
</organism>
<feature type="chain" id="PRO_0000275551" description="Cytochrome b6-f complex subunit 8">
    <location>
        <begin position="1"/>
        <end position="29"/>
    </location>
</feature>
<feature type="transmembrane region" description="Helical" evidence="1">
    <location>
        <begin position="3"/>
        <end position="23"/>
    </location>
</feature>
<proteinExistence type="inferred from homology"/>
<protein>
    <recommendedName>
        <fullName evidence="1">Cytochrome b6-f complex subunit 8</fullName>
    </recommendedName>
    <alternativeName>
        <fullName evidence="1">Cytochrome b6-f complex subunit PetN</fullName>
    </alternativeName>
    <alternativeName>
        <fullName evidence="1">Cytochrome b6-f complex subunit VIII</fullName>
    </alternativeName>
</protein>
<reference key="1">
    <citation type="journal article" date="2005" name="Plant Mol. Biol.">
        <title>Complete chloroplast genome sequence of Glycine max and comparative analyses with other legume genomes.</title>
        <authorList>
            <person name="Saski C."/>
            <person name="Lee S.-B."/>
            <person name="Daniell H."/>
            <person name="Wood T.C."/>
            <person name="Tomkins J."/>
            <person name="Kim H.-G."/>
            <person name="Jansen R.K."/>
        </authorList>
    </citation>
    <scope>NUCLEOTIDE SEQUENCE [LARGE SCALE GENOMIC DNA]</scope>
    <source>
        <strain>cv. PI 437654</strain>
    </source>
</reference>
<dbReference type="EMBL" id="DQ317523">
    <property type="protein sequence ID" value="ABC25122.1"/>
    <property type="molecule type" value="Genomic_DNA"/>
</dbReference>
<dbReference type="RefSeq" id="YP_538762.1">
    <property type="nucleotide sequence ID" value="NC_007942.1"/>
</dbReference>
<dbReference type="SMR" id="Q2PMT6"/>
<dbReference type="FunCoup" id="Q2PMT6">
    <property type="interactions" value="37"/>
</dbReference>
<dbReference type="STRING" id="3847.Q2PMT6"/>
<dbReference type="GeneID" id="3989289"/>
<dbReference type="KEGG" id="gmx:3989289"/>
<dbReference type="InParanoid" id="Q2PMT6"/>
<dbReference type="Proteomes" id="UP000008827">
    <property type="component" value="Chloroplast"/>
</dbReference>
<dbReference type="GO" id="GO:0009535">
    <property type="term" value="C:chloroplast thylakoid membrane"/>
    <property type="evidence" value="ECO:0007669"/>
    <property type="project" value="UniProtKB-SubCell"/>
</dbReference>
<dbReference type="GO" id="GO:0009512">
    <property type="term" value="C:cytochrome b6f complex"/>
    <property type="evidence" value="ECO:0007669"/>
    <property type="project" value="InterPro"/>
</dbReference>
<dbReference type="GO" id="GO:0045158">
    <property type="term" value="F:electron transporter, transferring electrons within cytochrome b6/f complex of photosystem II activity"/>
    <property type="evidence" value="ECO:0007669"/>
    <property type="project" value="InterPro"/>
</dbReference>
<dbReference type="GO" id="GO:0017004">
    <property type="term" value="P:cytochrome complex assembly"/>
    <property type="evidence" value="ECO:0007669"/>
    <property type="project" value="UniProtKB-UniRule"/>
</dbReference>
<dbReference type="GO" id="GO:0015979">
    <property type="term" value="P:photosynthesis"/>
    <property type="evidence" value="ECO:0007669"/>
    <property type="project" value="UniProtKB-KW"/>
</dbReference>
<dbReference type="HAMAP" id="MF_00395">
    <property type="entry name" value="Cytb6_f_PetN"/>
    <property type="match status" value="1"/>
</dbReference>
<dbReference type="InterPro" id="IPR036143">
    <property type="entry name" value="Cytochr_b6-f_cplx_su8_sf"/>
</dbReference>
<dbReference type="InterPro" id="IPR005497">
    <property type="entry name" value="Cytochrome_b6-f_cplx_su8"/>
</dbReference>
<dbReference type="Pfam" id="PF03742">
    <property type="entry name" value="PetN"/>
    <property type="match status" value="1"/>
</dbReference>
<dbReference type="SUPFAM" id="SSF103451">
    <property type="entry name" value="PetN subunit of the cytochrome b6f complex"/>
    <property type="match status" value="1"/>
</dbReference>
<keyword id="KW-0150">Chloroplast</keyword>
<keyword id="KW-0249">Electron transport</keyword>
<keyword id="KW-0472">Membrane</keyword>
<keyword id="KW-0602">Photosynthesis</keyword>
<keyword id="KW-0934">Plastid</keyword>
<keyword id="KW-1185">Reference proteome</keyword>
<keyword id="KW-0793">Thylakoid</keyword>
<keyword id="KW-0812">Transmembrane</keyword>
<keyword id="KW-1133">Transmembrane helix</keyword>
<keyword id="KW-0813">Transport</keyword>
<geneLocation type="chloroplast"/>
<gene>
    <name evidence="1" type="primary">petN</name>
</gene>
<accession>Q2PMT6</accession>
<evidence type="ECO:0000255" key="1">
    <source>
        <dbReference type="HAMAP-Rule" id="MF_00395"/>
    </source>
</evidence>
<name>PETN_SOYBN</name>
<comment type="function">
    <text evidence="1">Component of the cytochrome b6-f complex, which mediates electron transfer between photosystem II (PSII) and photosystem I (PSI), cyclic electron flow around PSI, and state transitions.</text>
</comment>
<comment type="subunit">
    <text evidence="1">The 4 large subunits of the cytochrome b6-f complex are cytochrome b6, subunit IV (17 kDa polypeptide, PetD), cytochrome f and the Rieske protein, while the 4 small subunits are PetG, PetL, PetM and PetN. The complex functions as a dimer.</text>
</comment>
<comment type="subcellular location">
    <subcellularLocation>
        <location>Plastid</location>
        <location>Chloroplast thylakoid membrane</location>
        <topology>Single-pass membrane protein</topology>
    </subcellularLocation>
</comment>
<comment type="similarity">
    <text evidence="1">Belongs to the PetN family.</text>
</comment>